<accession>B7STY1</accession>
<evidence type="ECO:0000255" key="1"/>
<evidence type="ECO:0000255" key="2">
    <source>
        <dbReference type="PROSITE-ProRule" id="PRU00258"/>
    </source>
</evidence>
<evidence type="ECO:0000269" key="3">
    <source>
    </source>
</evidence>
<evidence type="ECO:0000269" key="4">
    <source>
    </source>
</evidence>
<evidence type="ECO:0000269" key="5">
    <source>
    </source>
</evidence>
<evidence type="ECO:0000269" key="6">
    <source>
    </source>
</evidence>
<evidence type="ECO:0000269" key="7">
    <source>
    </source>
</evidence>
<evidence type="ECO:0000303" key="8">
    <source>
    </source>
</evidence>
<evidence type="ECO:0000305" key="9"/>
<organism>
    <name type="scientific">Tapinella panuoides</name>
    <name type="common">Oyster rollrim mushroom</name>
    <name type="synonym">Paxillus panuoides</name>
    <dbReference type="NCBI Taxonomy" id="80604"/>
    <lineage>
        <taxon>Eukaryota</taxon>
        <taxon>Fungi</taxon>
        <taxon>Dikarya</taxon>
        <taxon>Basidiomycota</taxon>
        <taxon>Agaricomycotina</taxon>
        <taxon>Agaricomycetes</taxon>
        <taxon>Agaricomycetidae</taxon>
        <taxon>Boletales</taxon>
        <taxon>Tapinellineae</taxon>
        <taxon>Tapinellaceae</taxon>
        <taxon>Tapinella</taxon>
    </lineage>
</organism>
<dbReference type="EC" id="2.3.1.-" evidence="4"/>
<dbReference type="EMBL" id="EU711405">
    <property type="protein sequence ID" value="ACH90386.1"/>
    <property type="molecule type" value="Genomic_DNA"/>
</dbReference>
<dbReference type="SMR" id="B7STY1"/>
<dbReference type="ESTHER" id="tappa-atra">
    <property type="family name" value="Thioesterase"/>
</dbReference>
<dbReference type="BioCyc" id="MetaCyc:MONOMER-18722"/>
<dbReference type="GO" id="GO:0016740">
    <property type="term" value="F:transferase activity"/>
    <property type="evidence" value="ECO:0007669"/>
    <property type="project" value="UniProtKB-KW"/>
</dbReference>
<dbReference type="GO" id="GO:0031957">
    <property type="term" value="F:very long-chain fatty acid-CoA ligase activity"/>
    <property type="evidence" value="ECO:0007669"/>
    <property type="project" value="TreeGrafter"/>
</dbReference>
<dbReference type="GO" id="GO:0006633">
    <property type="term" value="P:fatty acid biosynthetic process"/>
    <property type="evidence" value="ECO:0007669"/>
    <property type="project" value="TreeGrafter"/>
</dbReference>
<dbReference type="CDD" id="cd05906">
    <property type="entry name" value="A_NRPS_TubE_like"/>
    <property type="match status" value="1"/>
</dbReference>
<dbReference type="Gene3D" id="3.30.300.30">
    <property type="match status" value="1"/>
</dbReference>
<dbReference type="Gene3D" id="1.10.1200.10">
    <property type="entry name" value="ACP-like"/>
    <property type="match status" value="1"/>
</dbReference>
<dbReference type="Gene3D" id="3.40.50.1820">
    <property type="entry name" value="alpha/beta hydrolase"/>
    <property type="match status" value="1"/>
</dbReference>
<dbReference type="Gene3D" id="3.40.50.12780">
    <property type="entry name" value="N-terminal domain of ligase-like"/>
    <property type="match status" value="1"/>
</dbReference>
<dbReference type="InterPro" id="IPR029058">
    <property type="entry name" value="AB_hydrolase_fold"/>
</dbReference>
<dbReference type="InterPro" id="IPR036736">
    <property type="entry name" value="ACP-like_sf"/>
</dbReference>
<dbReference type="InterPro" id="IPR045851">
    <property type="entry name" value="AMP-bd_C_sf"/>
</dbReference>
<dbReference type="InterPro" id="IPR020845">
    <property type="entry name" value="AMP-binding_CS"/>
</dbReference>
<dbReference type="InterPro" id="IPR000873">
    <property type="entry name" value="AMP-dep_synth/lig_dom"/>
</dbReference>
<dbReference type="InterPro" id="IPR042099">
    <property type="entry name" value="ANL_N_sf"/>
</dbReference>
<dbReference type="InterPro" id="IPR020802">
    <property type="entry name" value="PKS_thioesterase"/>
</dbReference>
<dbReference type="InterPro" id="IPR009081">
    <property type="entry name" value="PP-bd_ACP"/>
</dbReference>
<dbReference type="InterPro" id="IPR001031">
    <property type="entry name" value="Thioesterase"/>
</dbReference>
<dbReference type="PANTHER" id="PTHR24096">
    <property type="entry name" value="LONG-CHAIN-FATTY-ACID--COA LIGASE"/>
    <property type="match status" value="1"/>
</dbReference>
<dbReference type="PANTHER" id="PTHR24096:SF267">
    <property type="entry name" value="MALONATE--COA LIGASE ACSF3, MITOCHONDRIAL"/>
    <property type="match status" value="1"/>
</dbReference>
<dbReference type="Pfam" id="PF00501">
    <property type="entry name" value="AMP-binding"/>
    <property type="match status" value="1"/>
</dbReference>
<dbReference type="Pfam" id="PF00550">
    <property type="entry name" value="PP-binding"/>
    <property type="match status" value="1"/>
</dbReference>
<dbReference type="Pfam" id="PF00975">
    <property type="entry name" value="Thioesterase"/>
    <property type="match status" value="1"/>
</dbReference>
<dbReference type="SMART" id="SM00824">
    <property type="entry name" value="PKS_TE"/>
    <property type="match status" value="1"/>
</dbReference>
<dbReference type="SUPFAM" id="SSF56801">
    <property type="entry name" value="Acetyl-CoA synthetase-like"/>
    <property type="match status" value="1"/>
</dbReference>
<dbReference type="SUPFAM" id="SSF47336">
    <property type="entry name" value="ACP-like"/>
    <property type="match status" value="1"/>
</dbReference>
<dbReference type="SUPFAM" id="SSF53474">
    <property type="entry name" value="alpha/beta-Hydrolases"/>
    <property type="match status" value="1"/>
</dbReference>
<dbReference type="PROSITE" id="PS00455">
    <property type="entry name" value="AMP_BINDING"/>
    <property type="match status" value="1"/>
</dbReference>
<dbReference type="PROSITE" id="PS50075">
    <property type="entry name" value="CARRIER"/>
    <property type="match status" value="1"/>
</dbReference>
<proteinExistence type="evidence at protein level"/>
<reference key="1">
    <citation type="journal article" date="2008" name="Fungal Genet. Biol.">
        <title>Characterization of the atromentin biosynthesis genes and enzymes in the homobasidiomycete Tapinella panuoides.</title>
        <authorList>
            <person name="Schneider P."/>
            <person name="Bouhired S."/>
            <person name="Hoffmeister D."/>
        </authorList>
    </citation>
    <scope>NUCLEOTIDE SEQUENCE [GENOMIC DNA]</scope>
    <scope>FUNCTION</scope>
    <scope>CATALYTIC ACTIVITY</scope>
    <scope>BIOPHYSICOCHEMICAL PROPERTIES</scope>
    <scope>PATHWAY</scope>
</reference>
<reference key="2">
    <citation type="journal article" date="1965" name="J. Pharm. Sci.">
        <title>Atromentin, anticoagulant from Hydnellum diabolus.</title>
        <authorList>
            <person name="Khanna J.M."/>
            <person name="Malone M.H."/>
            <person name="Euler K.L."/>
            <person name="Brady L.R."/>
        </authorList>
    </citation>
    <scope>BIOTECHNOLOGY</scope>
</reference>
<reference key="3">
    <citation type="journal article" date="1984" name="Can. J. Microbiol.">
        <title>The antibacterial activity of some naturally occurring 2,5-dihydroxy-1,4-benzoquinones.</title>
        <authorList>
            <person name="Brewer D."/>
            <person name="Jen W.C."/>
            <person name="Jones G.A."/>
            <person name="Taylor A."/>
        </authorList>
    </citation>
    <scope>BIOTECHNOLOGY</scope>
</reference>
<reference key="4">
    <citation type="journal article" date="2006" name="J. Antibiot.">
        <title>Atromentin and leucomelone, the first inhibitors specific to enoyl-ACP reductase (FabK) of Streptococcus pneumoniae.</title>
        <authorList>
            <person name="Zheng C.J."/>
            <person name="Sohn M.J."/>
            <person name="Kim W.G."/>
        </authorList>
    </citation>
    <scope>BIOTECHNOLOGY</scope>
</reference>
<reference key="5">
    <citation type="journal article" date="2009" name="J. Microbiol. Biotechnol.">
        <title>Atromentin-induced apoptosis in human leukemia U937 cells.</title>
        <authorList>
            <person name="Kim J.H."/>
            <person name="Lee C.H."/>
        </authorList>
    </citation>
    <scope>BIOTECHNOLOGY</scope>
</reference>
<feature type="chain" id="PRO_0000437678" description="Atromentin synthetase">
    <location>
        <begin position="1"/>
        <end position="957"/>
    </location>
</feature>
<feature type="domain" description="Carrier" evidence="2">
    <location>
        <begin position="596"/>
        <end position="674"/>
    </location>
</feature>
<feature type="region of interest" description="Adenylation (A) domain" evidence="1">
    <location>
        <begin position="59"/>
        <end position="464"/>
    </location>
</feature>
<feature type="region of interest" description="Thiolation and peptide carrier (T) domain" evidence="1">
    <location>
        <begin position="601"/>
        <end position="671"/>
    </location>
</feature>
<feature type="region of interest" description="Thioesterase (TE) domain" evidence="1">
    <location>
        <begin position="697"/>
        <end position="947"/>
    </location>
</feature>
<feature type="modified residue" description="O-(pantetheine 4'-phosphoryl)serine" evidence="2">
    <location>
        <position position="633"/>
    </location>
</feature>
<sequence>MAPTAVFSNPATNPVANLKASVKTAEGVPATLNDLLLQATEMYPSHELSFITSSAHDSSVQARTFQDFNQRVRNLASALAAWKKPAGEVVVVYLTEHEDNMSAVWACLLAGLVPCLQPALSAQQEHKEGHIAHIRKLFGSATWLTNDAGAMQLDTIKGLDVHLFSDLLASAEKSSVAANYVARQSQPDDEAILFLTSGSTGFSKAVVHTHRTIINACIAKGANYRLTPQTNILNWVGFDHVAGSLEMHIAPLLYGCSQLHVHASAILSDPLLLLRLIDERSIDIAFAPNFLLAKMVRDLEKRTDLHGKFDLSSLRRMNSGGEAVVSKTAVAFVQLLKKLGRNPSKVSFKVAAGFGMTETCAGCIYDVVDLAENSPKHEFLALGAPVHGCEMRIVDPEDGATPRSDGQPGELQVRGPMIFVRYYNNPEATKSSFVEGGWYRTGDIGIIENGNMRLSGRIKDTVIVHGVSYGIPELETYLQTVQGVTHSFLAAAPYRAPGQETEGFVVFYAPTFDLQGDDASKKLSETHRAIKDVSVKMMTLPPQHIVPIPMDQMEKTTLGKLSRARLLSQFVQGALAKHVARAEELISMARGASFVTPSTDDEKALAAIYAGIFNLQSNEVSARDNFFELGGTSIDVIRLKREGEAHFGLSEIPIIQILKNPIVSDLAKYVNGLVNNDASANEYDPIVPLQLSGDKTPIFFVHPGVGEVLIFVNLAKYFQNERPFYAFRARGFEPGHPFFGSMDEMVTSYANAMKKTQPKGPYAIAGYSYGGVVAFEVAKRLESMGEEVKFVGLINIPPHIADRMHEIDWTGGMLNLAYFLSLVTKQDATDLHPKLKTMTKEEQLEVVWKLAPPERVTELQLTPGKLDHWVSIAGSLIECGKSYNPGGNVSAVDVFYAIPLKGSKEDWLNKQLKPWSQFSRGEPQFIDVPGQHYTLMDFDHVPQFQKIFRGRLEARGL</sequence>
<protein>
    <recommendedName>
        <fullName evidence="8">Atromentin synthetase</fullName>
        <ecNumber evidence="4">2.3.1.-</ecNumber>
    </recommendedName>
    <alternativeName>
        <fullName evidence="9">Atromentin biosynthesis protein A</fullName>
    </alternativeName>
    <alternativeName>
        <fullName evidence="9">Nonribosomal peptide synthase atrA</fullName>
    </alternativeName>
</protein>
<keyword id="KW-0596">Phosphopantetheine</keyword>
<keyword id="KW-0597">Phosphoprotein</keyword>
<keyword id="KW-0808">Transferase</keyword>
<name>ATRA_TAPPA</name>
<comment type="function">
    <text evidence="4">The L-tyrosine:2-oxoglutarate aminotransferase atrD and the atromentin synthetase atrA catalyze consecutive steps to turn over L-tyrosine into atromentin, which represents the generic precursor molecule for the entire terphenylquinone and pulvinic acid family of pigments, which are widely distributed secondary metabolites in homobasidiomycetes (PubMed:18805498). The first step is catalyzed by atrD which converts L-tyrosine in to 4-hydroxyphenylpyruvate (4-HPP) (PubMed:18805498). Adenylation of two 4-HPP monomers by the atrA adenylation (A) domain, ester bond formation between monomers and atrA, and symmetric C-C-bond formation between two monomers by atrA leads to atromentin (PubMed:18805498).</text>
</comment>
<comment type="biophysicochemical properties">
    <kinetics>
        <KM evidence="4">1.37 uM for 4-hydroxyphenylpyruvic acid</KM>
        <KM evidence="4">590 uM for 2-oxoglutarate</KM>
    </kinetics>
    <phDependence>
        <text evidence="4">Optimum pH is 6.5.</text>
    </phDependence>
    <temperatureDependence>
        <text evidence="4">Optimum temperature is 25 degrees Celsius.</text>
    </temperatureDependence>
</comment>
<comment type="pathway">
    <text evidence="4">Secondary metabolite biosynthesis.</text>
</comment>
<comment type="biotechnology">
    <text evidence="3 5 6 7">Atromentin has been shown to induce caspase-3 and poly (ADP-ribose) polymerase (PARP) in human leukemia U937 cells (PubMed:19809251). It also has anticoagulant activity (PubMed:5862512). Moreover, atromentin has antimicrobial activity (PubMed:6541963). It acts especially as an inhibitor of FabK, the enoyl-acyl carrier protein (ACP) reductase of S.pneumoniae (PubMed:17323650).</text>
</comment>
<comment type="similarity">
    <text evidence="9">Belongs to the ATP-dependent AMP-binding enzyme family.</text>
</comment>
<gene>
    <name evidence="8" type="primary">atrA</name>
</gene>